<name>PLSY_GEOSW</name>
<reference key="1">
    <citation type="submission" date="2009-06" db="EMBL/GenBank/DDBJ databases">
        <title>Complete sequence of chromosome of Geopacillus sp. WCH70.</title>
        <authorList>
            <consortium name="US DOE Joint Genome Institute"/>
            <person name="Lucas S."/>
            <person name="Copeland A."/>
            <person name="Lapidus A."/>
            <person name="Glavina del Rio T."/>
            <person name="Dalin E."/>
            <person name="Tice H."/>
            <person name="Bruce D."/>
            <person name="Goodwin L."/>
            <person name="Pitluck S."/>
            <person name="Chertkov O."/>
            <person name="Brettin T."/>
            <person name="Detter J.C."/>
            <person name="Han C."/>
            <person name="Larimer F."/>
            <person name="Land M."/>
            <person name="Hauser L."/>
            <person name="Kyrpides N."/>
            <person name="Mikhailova N."/>
            <person name="Brumm P."/>
            <person name="Mead D.A."/>
            <person name="Richardson P."/>
        </authorList>
    </citation>
    <scope>NUCLEOTIDE SEQUENCE [LARGE SCALE GENOMIC DNA]</scope>
    <source>
        <strain>WCH70</strain>
    </source>
</reference>
<evidence type="ECO:0000255" key="1">
    <source>
        <dbReference type="HAMAP-Rule" id="MF_01043"/>
    </source>
</evidence>
<gene>
    <name evidence="1" type="primary">plsY</name>
    <name type="ordered locus">GWCH70_1592</name>
</gene>
<keyword id="KW-1003">Cell membrane</keyword>
<keyword id="KW-0444">Lipid biosynthesis</keyword>
<keyword id="KW-0443">Lipid metabolism</keyword>
<keyword id="KW-0472">Membrane</keyword>
<keyword id="KW-0594">Phospholipid biosynthesis</keyword>
<keyword id="KW-1208">Phospholipid metabolism</keyword>
<keyword id="KW-0808">Transferase</keyword>
<keyword id="KW-0812">Transmembrane</keyword>
<keyword id="KW-1133">Transmembrane helix</keyword>
<dbReference type="EC" id="2.3.1.275" evidence="1"/>
<dbReference type="EMBL" id="CP001638">
    <property type="protein sequence ID" value="ACS24387.1"/>
    <property type="molecule type" value="Genomic_DNA"/>
</dbReference>
<dbReference type="SMR" id="C5DAS3"/>
<dbReference type="STRING" id="471223.GWCH70_1592"/>
<dbReference type="KEGG" id="gwc:GWCH70_1592"/>
<dbReference type="eggNOG" id="COG0344">
    <property type="taxonomic scope" value="Bacteria"/>
</dbReference>
<dbReference type="HOGENOM" id="CLU_081254_4_0_9"/>
<dbReference type="OrthoDB" id="9777124at2"/>
<dbReference type="UniPathway" id="UPA00085"/>
<dbReference type="GO" id="GO:0005886">
    <property type="term" value="C:plasma membrane"/>
    <property type="evidence" value="ECO:0007669"/>
    <property type="project" value="UniProtKB-SubCell"/>
</dbReference>
<dbReference type="GO" id="GO:0043772">
    <property type="term" value="F:acyl-phosphate glycerol-3-phosphate acyltransferase activity"/>
    <property type="evidence" value="ECO:0007669"/>
    <property type="project" value="UniProtKB-UniRule"/>
</dbReference>
<dbReference type="GO" id="GO:0008654">
    <property type="term" value="P:phospholipid biosynthetic process"/>
    <property type="evidence" value="ECO:0007669"/>
    <property type="project" value="UniProtKB-UniRule"/>
</dbReference>
<dbReference type="HAMAP" id="MF_01043">
    <property type="entry name" value="PlsY"/>
    <property type="match status" value="1"/>
</dbReference>
<dbReference type="InterPro" id="IPR003811">
    <property type="entry name" value="G3P_acylTferase_PlsY"/>
</dbReference>
<dbReference type="NCBIfam" id="TIGR00023">
    <property type="entry name" value="glycerol-3-phosphate 1-O-acyltransferase PlsY"/>
    <property type="match status" value="1"/>
</dbReference>
<dbReference type="PANTHER" id="PTHR30309:SF0">
    <property type="entry name" value="GLYCEROL-3-PHOSPHATE ACYLTRANSFERASE-RELATED"/>
    <property type="match status" value="1"/>
</dbReference>
<dbReference type="PANTHER" id="PTHR30309">
    <property type="entry name" value="INNER MEMBRANE PROTEIN YGIH"/>
    <property type="match status" value="1"/>
</dbReference>
<dbReference type="Pfam" id="PF02660">
    <property type="entry name" value="G3P_acyltransf"/>
    <property type="match status" value="1"/>
</dbReference>
<dbReference type="SMART" id="SM01207">
    <property type="entry name" value="G3P_acyltransf"/>
    <property type="match status" value="1"/>
</dbReference>
<sequence>MEKALILITAYLLGSIPFALLVGKIGYGIDIREHGSGNLGGTNTFRVLGVKAGMIVTCGDMLKGTLAASLPVLFSVHIHPLLAGVCAVIGHTYPIFAKFRGGKAVATSAGVMLFYSPFLFVSLLTVFFIVLYISKYVSLSSMLAGVYAVIYTIFFTDDIPLMIAVSLLTAFIFYRHRANIKRIVNKTEPKIKWLGRK</sequence>
<accession>C5DAS3</accession>
<comment type="function">
    <text evidence="1">Catalyzes the transfer of an acyl group from acyl-phosphate (acyl-PO(4)) to glycerol-3-phosphate (G3P) to form lysophosphatidic acid (LPA). This enzyme utilizes acyl-phosphate as fatty acyl donor, but not acyl-CoA or acyl-ACP.</text>
</comment>
<comment type="catalytic activity">
    <reaction evidence="1">
        <text>an acyl phosphate + sn-glycerol 3-phosphate = a 1-acyl-sn-glycero-3-phosphate + phosphate</text>
        <dbReference type="Rhea" id="RHEA:34075"/>
        <dbReference type="ChEBI" id="CHEBI:43474"/>
        <dbReference type="ChEBI" id="CHEBI:57597"/>
        <dbReference type="ChEBI" id="CHEBI:57970"/>
        <dbReference type="ChEBI" id="CHEBI:59918"/>
        <dbReference type="EC" id="2.3.1.275"/>
    </reaction>
</comment>
<comment type="pathway">
    <text evidence="1">Lipid metabolism; phospholipid metabolism.</text>
</comment>
<comment type="subunit">
    <text evidence="1">Probably interacts with PlsX.</text>
</comment>
<comment type="subcellular location">
    <subcellularLocation>
        <location evidence="1">Cell membrane</location>
        <topology evidence="1">Multi-pass membrane protein</topology>
    </subcellularLocation>
</comment>
<comment type="similarity">
    <text evidence="1">Belongs to the PlsY family.</text>
</comment>
<protein>
    <recommendedName>
        <fullName evidence="1">Glycerol-3-phosphate acyltransferase</fullName>
    </recommendedName>
    <alternativeName>
        <fullName evidence="1">Acyl-PO4 G3P acyltransferase</fullName>
    </alternativeName>
    <alternativeName>
        <fullName evidence="1">Acyl-phosphate--glycerol-3-phosphate acyltransferase</fullName>
    </alternativeName>
    <alternativeName>
        <fullName evidence="1">G3P acyltransferase</fullName>
        <shortName evidence="1">GPAT</shortName>
        <ecNumber evidence="1">2.3.1.275</ecNumber>
    </alternativeName>
    <alternativeName>
        <fullName evidence="1">Lysophosphatidic acid synthase</fullName>
        <shortName evidence="1">LPA synthase</shortName>
    </alternativeName>
</protein>
<feature type="chain" id="PRO_1000213411" description="Glycerol-3-phosphate acyltransferase">
    <location>
        <begin position="1"/>
        <end position="197"/>
    </location>
</feature>
<feature type="transmembrane region" description="Helical" evidence="1">
    <location>
        <begin position="5"/>
        <end position="25"/>
    </location>
</feature>
<feature type="transmembrane region" description="Helical" evidence="1">
    <location>
        <begin position="70"/>
        <end position="90"/>
    </location>
</feature>
<feature type="transmembrane region" description="Helical" evidence="1">
    <location>
        <begin position="111"/>
        <end position="131"/>
    </location>
</feature>
<feature type="transmembrane region" description="Helical" evidence="1">
    <location>
        <begin position="153"/>
        <end position="173"/>
    </location>
</feature>
<proteinExistence type="inferred from homology"/>
<organism>
    <name type="scientific">Geobacillus sp. (strain WCH70)</name>
    <dbReference type="NCBI Taxonomy" id="471223"/>
    <lineage>
        <taxon>Bacteria</taxon>
        <taxon>Bacillati</taxon>
        <taxon>Bacillota</taxon>
        <taxon>Bacilli</taxon>
        <taxon>Bacillales</taxon>
        <taxon>Anoxybacillaceae</taxon>
        <taxon>Geobacillus</taxon>
    </lineage>
</organism>